<gene>
    <name type="primary">BS2</name>
</gene>
<dbReference type="EMBL" id="J02865">
    <property type="protein sequence ID" value="AAA30168.1"/>
    <property type="molecule type" value="Genomic_DNA"/>
</dbReference>
<dbReference type="PIR" id="A32820">
    <property type="entry name" value="A32820"/>
</dbReference>
<dbReference type="SMR" id="P12865"/>
<dbReference type="GlyCosmos" id="P12865">
    <property type="glycosylation" value="13 sites, No reported glycans"/>
</dbReference>
<dbReference type="BRENDA" id="5.3.4.1">
    <property type="organism ID" value="6519"/>
</dbReference>
<dbReference type="GO" id="GO:0005783">
    <property type="term" value="C:endoplasmic reticulum"/>
    <property type="evidence" value="ECO:0007669"/>
    <property type="project" value="TreeGrafter"/>
</dbReference>
<dbReference type="GO" id="GO:0003756">
    <property type="term" value="F:protein disulfide isomerase activity"/>
    <property type="evidence" value="ECO:0007669"/>
    <property type="project" value="InterPro"/>
</dbReference>
<dbReference type="GO" id="GO:0006457">
    <property type="term" value="P:protein folding"/>
    <property type="evidence" value="ECO:0007669"/>
    <property type="project" value="TreeGrafter"/>
</dbReference>
<dbReference type="GO" id="GO:0034976">
    <property type="term" value="P:response to endoplasmic reticulum stress"/>
    <property type="evidence" value="ECO:0007669"/>
    <property type="project" value="TreeGrafter"/>
</dbReference>
<dbReference type="CDD" id="cd02961">
    <property type="entry name" value="PDI_a_family"/>
    <property type="match status" value="1"/>
</dbReference>
<dbReference type="CDD" id="cd02995">
    <property type="entry name" value="PDI_a_PDI_a'_C"/>
    <property type="match status" value="1"/>
</dbReference>
<dbReference type="CDD" id="cd02982">
    <property type="entry name" value="PDI_b'_family"/>
    <property type="match status" value="1"/>
</dbReference>
<dbReference type="CDD" id="cd02981">
    <property type="entry name" value="PDI_b_family"/>
    <property type="match status" value="1"/>
</dbReference>
<dbReference type="Gene3D" id="3.40.30.10">
    <property type="entry name" value="Glutaredoxin"/>
    <property type="match status" value="4"/>
</dbReference>
<dbReference type="InterPro" id="IPR005788">
    <property type="entry name" value="PDI_thioredoxin-like_dom"/>
</dbReference>
<dbReference type="InterPro" id="IPR036249">
    <property type="entry name" value="Thioredoxin-like_sf"/>
</dbReference>
<dbReference type="InterPro" id="IPR017937">
    <property type="entry name" value="Thioredoxin_CS"/>
</dbReference>
<dbReference type="InterPro" id="IPR013766">
    <property type="entry name" value="Thioredoxin_domain"/>
</dbReference>
<dbReference type="NCBIfam" id="TIGR01126">
    <property type="entry name" value="pdi_dom"/>
    <property type="match status" value="1"/>
</dbReference>
<dbReference type="PANTHER" id="PTHR18929">
    <property type="entry name" value="PROTEIN DISULFIDE ISOMERASE"/>
    <property type="match status" value="1"/>
</dbReference>
<dbReference type="PANTHER" id="PTHR18929:SF246">
    <property type="entry name" value="PROTEIN DISULFIDE ISOMERASE-LIKE 1-4"/>
    <property type="match status" value="1"/>
</dbReference>
<dbReference type="Pfam" id="PF00085">
    <property type="entry name" value="Thioredoxin"/>
    <property type="match status" value="2"/>
</dbReference>
<dbReference type="Pfam" id="PF13848">
    <property type="entry name" value="Thioredoxin_6"/>
    <property type="match status" value="1"/>
</dbReference>
<dbReference type="SUPFAM" id="SSF52833">
    <property type="entry name" value="Thioredoxin-like"/>
    <property type="match status" value="4"/>
</dbReference>
<dbReference type="PROSITE" id="PS00194">
    <property type="entry name" value="THIOREDOXIN_1"/>
    <property type="match status" value="2"/>
</dbReference>
<dbReference type="PROSITE" id="PS51352">
    <property type="entry name" value="THIOREDOXIN_2"/>
    <property type="match status" value="2"/>
</dbReference>
<protein>
    <recommendedName>
        <fullName>Bloodstream-specific protein 2</fullName>
    </recommendedName>
</protein>
<sequence>MRAIFLVALALATMRESTAESLKLTKENFNETIAKSEIFLVKFYVDTCGYCQMLAPEWEKAANETIDNALMGEVDCHSQPELAANFSIRGYPTIILFRNGKEAEHYGGARTKDDIIKYIKANVGPAVTPASNAEEVTRAKEEHDVVCVGLTANNSTSLSTTLAEAAQSFRVSLKFFEAEPKLFPDEKPETIVVYRKGGEKEVYDGPMEVEKLTEFLQISRVAFGGEITPENYQYYSVIKRPVGWAMVKPNETASIELKESLTEVGKKMRSHMVVLWVNISKHPVWRDFGVPEDAKYPAFLAIHWGANYLHSTAEVVTRESLEKFILEFAAGRVEPTIKSLPVPEVETVDGKTTIVAKTMQKHLTSGKDMLILFFAPWCGHCKNFAPTFDKIAKEFDATDLIVAELDATANYVNSSTFTVTAFPTVFFVPNGGKPVVFEGERSFENVYEFVRKHVTTFKVSEKPANVTEEKKSEEENKSSKSNESNDSNESNVDKQDL</sequence>
<feature type="signal peptide" evidence="2">
    <location>
        <begin position="1"/>
        <end position="14"/>
    </location>
</feature>
<feature type="chain" id="PRO_0000034246" description="Bloodstream-specific protein 2">
    <location>
        <begin position="15"/>
        <end position="497"/>
    </location>
</feature>
<feature type="domain" description="Thioredoxin 1" evidence="3">
    <location>
        <begin position="15"/>
        <end position="124"/>
    </location>
</feature>
<feature type="domain" description="Thioredoxin 2" evidence="3">
    <location>
        <begin position="334"/>
        <end position="455"/>
    </location>
</feature>
<feature type="region of interest" description="Disordered" evidence="4">
    <location>
        <begin position="461"/>
        <end position="497"/>
    </location>
</feature>
<feature type="compositionally biased region" description="Basic and acidic residues" evidence="4">
    <location>
        <begin position="467"/>
        <end position="480"/>
    </location>
</feature>
<feature type="compositionally biased region" description="Low complexity" evidence="4">
    <location>
        <begin position="481"/>
        <end position="490"/>
    </location>
</feature>
<feature type="active site" description="Nucleophile" evidence="1">
    <location>
        <position position="378"/>
    </location>
</feature>
<feature type="active site" description="Nucleophile" evidence="1">
    <location>
        <position position="381"/>
    </location>
</feature>
<feature type="site" description="Contributes to redox potential value" evidence="1">
    <location>
        <position position="379"/>
    </location>
</feature>
<feature type="site" description="Contributes to redox potential value" evidence="1">
    <location>
        <position position="380"/>
    </location>
</feature>
<feature type="site" description="Lowers pKa of C-terminal Cys of second active site" evidence="1">
    <location>
        <position position="441"/>
    </location>
</feature>
<feature type="glycosylation site" description="N-linked (GlcNAc...) asparagine" evidence="2">
    <location>
        <position position="30"/>
    </location>
</feature>
<feature type="glycosylation site" description="N-linked (GlcNAc...) asparagine" evidence="2">
    <location>
        <position position="63"/>
    </location>
</feature>
<feature type="glycosylation site" description="N-linked (GlcNAc...) asparagine" evidence="2">
    <location>
        <position position="85"/>
    </location>
</feature>
<feature type="glycosylation site" description="N-linked (GlcNAc...) asparagine" evidence="2">
    <location>
        <position position="153"/>
    </location>
</feature>
<feature type="glycosylation site" description="N-linked (GlcNAc...) asparagine" evidence="2">
    <location>
        <position position="154"/>
    </location>
</feature>
<feature type="glycosylation site" description="N-linked (GlcNAc...) asparagine" evidence="2">
    <location>
        <position position="250"/>
    </location>
</feature>
<feature type="glycosylation site" description="N-linked (GlcNAc...) asparagine" evidence="2">
    <location>
        <position position="278"/>
    </location>
</feature>
<feature type="glycosylation site" description="N-linked (GlcNAc...) asparagine" evidence="2">
    <location>
        <position position="413"/>
    </location>
</feature>
<feature type="glycosylation site" description="N-linked (GlcNAc...) asparagine" evidence="2">
    <location>
        <position position="465"/>
    </location>
</feature>
<feature type="glycosylation site" description="N-linked (GlcNAc...) asparagine" evidence="2">
    <location>
        <position position="476"/>
    </location>
</feature>
<feature type="glycosylation site" description="N-linked (GlcNAc...) asparagine" evidence="2">
    <location>
        <position position="482"/>
    </location>
</feature>
<feature type="glycosylation site" description="N-linked (GlcNAc...) asparagine" evidence="2">
    <location>
        <position position="485"/>
    </location>
</feature>
<feature type="glycosylation site" description="N-linked (GlcNAc...) asparagine" evidence="2">
    <location>
        <position position="488"/>
    </location>
</feature>
<feature type="disulfide bond" description="Redox-active" evidence="3">
    <location>
        <begin position="48"/>
        <end position="51"/>
    </location>
</feature>
<feature type="disulfide bond" description="Redox-active" evidence="3">
    <location>
        <begin position="378"/>
        <end position="381"/>
    </location>
</feature>
<reference key="1">
    <citation type="journal article" date="1989" name="Biochemistry">
        <title>A developmentally regulated gene of trypanosomes encodes a homologue of rat protein-disulfide isomerase and phosphoinositol-phospholipase C.</title>
        <authorList>
            <person name="Hsu M.P."/>
            <person name="Muhich M.L."/>
            <person name="Boothroyd J.C."/>
        </authorList>
    </citation>
    <scope>NUCLEOTIDE SEQUENCE [GENOMIC DNA]</scope>
</reference>
<comment type="similarity">
    <text evidence="5">Belongs to the protein disulfide isomerase family.</text>
</comment>
<keyword id="KW-1015">Disulfide bond</keyword>
<keyword id="KW-0325">Glycoprotein</keyword>
<keyword id="KW-0413">Isomerase</keyword>
<keyword id="KW-0676">Redox-active center</keyword>
<keyword id="KW-0677">Repeat</keyword>
<keyword id="KW-0732">Signal</keyword>
<evidence type="ECO:0000250" key="1"/>
<evidence type="ECO:0000255" key="2"/>
<evidence type="ECO:0000255" key="3">
    <source>
        <dbReference type="PROSITE-ProRule" id="PRU00691"/>
    </source>
</evidence>
<evidence type="ECO:0000256" key="4">
    <source>
        <dbReference type="SAM" id="MobiDB-lite"/>
    </source>
</evidence>
<evidence type="ECO:0000305" key="5"/>
<proteinExistence type="inferred from homology"/>
<name>BS2_TRYBB</name>
<organism>
    <name type="scientific">Trypanosoma brucei brucei</name>
    <dbReference type="NCBI Taxonomy" id="5702"/>
    <lineage>
        <taxon>Eukaryota</taxon>
        <taxon>Discoba</taxon>
        <taxon>Euglenozoa</taxon>
        <taxon>Kinetoplastea</taxon>
        <taxon>Metakinetoplastina</taxon>
        <taxon>Trypanosomatida</taxon>
        <taxon>Trypanosomatidae</taxon>
        <taxon>Trypanosoma</taxon>
    </lineage>
</organism>
<accession>P12865</accession>